<sequence>MLRIGLTGGIGAGKSLLSTTFSQCGGIVVDGDVLAREVVQPGTEGLASLVDAFGRDILLADGALDRQALAAKAFRDDESRGVLNGIVHPLVARRRSEIIAAVSGDAVVVEDIPLLVESGMAPLFPLVVVVHADVELRVRRLVEQRGMAEADARARIAAQASDQQRRAVADVWLDNSGSPEDLVRRARDVWNTRVQPFAHNLAQRQIARAPARLVPADPSWPDQARRIVNRLKIACGHKALRVDHIGSTAVSGFPDFLAKDVIDIQVTVESLDVADELAEPLLAAGYPRLEHITQDTEKTDARSTVGRYDHTDSAALWHKRVHASADPGRPTNVHLRVHGWPNQQFALLFVDWLAANPGAREDYLTVKCDADRRADGELARYVTAKEPWFLDAYQRAWEWADAVHWRP</sequence>
<comment type="function">
    <text evidence="1">Catalyzes the phosphorylation of the 3'-hydroxyl group of dephosphocoenzyme A to form coenzyme A.</text>
</comment>
<comment type="catalytic activity">
    <reaction evidence="1">
        <text>3'-dephospho-CoA + ATP = ADP + CoA + H(+)</text>
        <dbReference type="Rhea" id="RHEA:18245"/>
        <dbReference type="ChEBI" id="CHEBI:15378"/>
        <dbReference type="ChEBI" id="CHEBI:30616"/>
        <dbReference type="ChEBI" id="CHEBI:57287"/>
        <dbReference type="ChEBI" id="CHEBI:57328"/>
        <dbReference type="ChEBI" id="CHEBI:456216"/>
        <dbReference type="EC" id="2.7.1.24"/>
    </reaction>
</comment>
<comment type="pathway">
    <text evidence="1">Cofactor biosynthesis; coenzyme A biosynthesis; CoA from (R)-pantothenate: step 5/5.</text>
</comment>
<comment type="subcellular location">
    <subcellularLocation>
        <location evidence="1">Cytoplasm</location>
    </subcellularLocation>
</comment>
<comment type="domain">
    <text evidence="1">The C-terminal UPF0157 domain is involved in the proper folding of the full length enzyme.</text>
</comment>
<comment type="similarity">
    <text evidence="2">In the N-terminal section; belongs to the CoaE family.</text>
</comment>
<comment type="similarity">
    <text evidence="2">In the C-terminal section; belongs to the UPF0157 (GrpB) family.</text>
</comment>
<reference key="1">
    <citation type="journal article" date="2002" name="J. Bacteriol.">
        <title>Whole-genome comparison of Mycobacterium tuberculosis clinical and laboratory strains.</title>
        <authorList>
            <person name="Fleischmann R.D."/>
            <person name="Alland D."/>
            <person name="Eisen J.A."/>
            <person name="Carpenter L."/>
            <person name="White O."/>
            <person name="Peterson J.D."/>
            <person name="DeBoy R.T."/>
            <person name="Dodson R.J."/>
            <person name="Gwinn M.L."/>
            <person name="Haft D.H."/>
            <person name="Hickey E.K."/>
            <person name="Kolonay J.F."/>
            <person name="Nelson W.C."/>
            <person name="Umayam L.A."/>
            <person name="Ermolaeva M.D."/>
            <person name="Salzberg S.L."/>
            <person name="Delcher A."/>
            <person name="Utterback T.R."/>
            <person name="Weidman J.F."/>
            <person name="Khouri H.M."/>
            <person name="Gill J."/>
            <person name="Mikula A."/>
            <person name="Bishai W."/>
            <person name="Jacobs W.R. Jr."/>
            <person name="Venter J.C."/>
            <person name="Fraser C.M."/>
        </authorList>
    </citation>
    <scope>NUCLEOTIDE SEQUENCE [LARGE SCALE GENOMIC DNA]</scope>
    <source>
        <strain>CDC 1551 / Oshkosh</strain>
    </source>
</reference>
<keyword id="KW-0067">ATP-binding</keyword>
<keyword id="KW-0173">Coenzyme A biosynthesis</keyword>
<keyword id="KW-0963">Cytoplasm</keyword>
<keyword id="KW-0418">Kinase</keyword>
<keyword id="KW-0547">Nucleotide-binding</keyword>
<keyword id="KW-1185">Reference proteome</keyword>
<keyword id="KW-0808">Transferase</keyword>
<accession>P9WPA2</accession>
<accession>L0T8U1</accession>
<accession>O06148</accession>
<accession>P63826</accession>
<protein>
    <recommendedName>
        <fullName evidence="1">Dephospho-CoA kinase</fullName>
        <ecNumber evidence="1">2.7.1.24</ecNumber>
    </recommendedName>
    <alternativeName>
        <fullName evidence="1">Dephosphocoenzyme A kinase</fullName>
    </alternativeName>
</protein>
<name>COAE_MYCTO</name>
<organism>
    <name type="scientific">Mycobacterium tuberculosis (strain CDC 1551 / Oshkosh)</name>
    <dbReference type="NCBI Taxonomy" id="83331"/>
    <lineage>
        <taxon>Bacteria</taxon>
        <taxon>Bacillati</taxon>
        <taxon>Actinomycetota</taxon>
        <taxon>Actinomycetes</taxon>
        <taxon>Mycobacteriales</taxon>
        <taxon>Mycobacteriaceae</taxon>
        <taxon>Mycobacterium</taxon>
        <taxon>Mycobacterium tuberculosis complex</taxon>
    </lineage>
</organism>
<dbReference type="EC" id="2.7.1.24" evidence="1"/>
<dbReference type="EMBL" id="AE000516">
    <property type="protein sequence ID" value="AAK45937.1"/>
    <property type="molecule type" value="Genomic_DNA"/>
</dbReference>
<dbReference type="PIR" id="E70559">
    <property type="entry name" value="E70559"/>
</dbReference>
<dbReference type="RefSeq" id="WP_003408069.1">
    <property type="nucleotide sequence ID" value="NZ_KK341227.1"/>
</dbReference>
<dbReference type="SMR" id="P9WPA2"/>
<dbReference type="KEGG" id="mtc:MT1667"/>
<dbReference type="PATRIC" id="fig|83331.31.peg.1790"/>
<dbReference type="HOGENOM" id="CLU_067032_0_0_11"/>
<dbReference type="UniPathway" id="UPA00241">
    <property type="reaction ID" value="UER00356"/>
</dbReference>
<dbReference type="Proteomes" id="UP000001020">
    <property type="component" value="Chromosome"/>
</dbReference>
<dbReference type="GO" id="GO:0005737">
    <property type="term" value="C:cytoplasm"/>
    <property type="evidence" value="ECO:0007669"/>
    <property type="project" value="UniProtKB-SubCell"/>
</dbReference>
<dbReference type="GO" id="GO:0005524">
    <property type="term" value="F:ATP binding"/>
    <property type="evidence" value="ECO:0007669"/>
    <property type="project" value="UniProtKB-UniRule"/>
</dbReference>
<dbReference type="GO" id="GO:0004140">
    <property type="term" value="F:dephospho-CoA kinase activity"/>
    <property type="evidence" value="ECO:0007669"/>
    <property type="project" value="UniProtKB-UniRule"/>
</dbReference>
<dbReference type="GO" id="GO:0015937">
    <property type="term" value="P:coenzyme A biosynthetic process"/>
    <property type="evidence" value="ECO:0007669"/>
    <property type="project" value="UniProtKB-UniRule"/>
</dbReference>
<dbReference type="CDD" id="cd02022">
    <property type="entry name" value="DPCK"/>
    <property type="match status" value="1"/>
</dbReference>
<dbReference type="FunFam" id="3.30.460.10:FF:000066">
    <property type="entry name" value="Dephospho-CoA kinase"/>
    <property type="match status" value="1"/>
</dbReference>
<dbReference type="Gene3D" id="3.30.460.10">
    <property type="entry name" value="Beta Polymerase, domain 2"/>
    <property type="match status" value="1"/>
</dbReference>
<dbReference type="Gene3D" id="3.40.50.300">
    <property type="entry name" value="P-loop containing nucleotide triphosphate hydrolases"/>
    <property type="match status" value="1"/>
</dbReference>
<dbReference type="HAMAP" id="MF_00376">
    <property type="entry name" value="Dephospho_CoA_kinase"/>
    <property type="match status" value="1"/>
</dbReference>
<dbReference type="InterPro" id="IPR001977">
    <property type="entry name" value="Depp_CoAkinase"/>
</dbReference>
<dbReference type="InterPro" id="IPR007344">
    <property type="entry name" value="GrpB/CoaE"/>
</dbReference>
<dbReference type="InterPro" id="IPR043519">
    <property type="entry name" value="NT_sf"/>
</dbReference>
<dbReference type="InterPro" id="IPR027417">
    <property type="entry name" value="P-loop_NTPase"/>
</dbReference>
<dbReference type="NCBIfam" id="TIGR00152">
    <property type="entry name" value="dephospho-CoA kinase"/>
    <property type="match status" value="1"/>
</dbReference>
<dbReference type="NCBIfam" id="NF002879">
    <property type="entry name" value="PRK03333.1"/>
    <property type="match status" value="1"/>
</dbReference>
<dbReference type="PANTHER" id="PTHR10695:SF46">
    <property type="entry name" value="BIFUNCTIONAL COENZYME A SYNTHASE-RELATED"/>
    <property type="match status" value="1"/>
</dbReference>
<dbReference type="PANTHER" id="PTHR10695">
    <property type="entry name" value="DEPHOSPHO-COA KINASE-RELATED"/>
    <property type="match status" value="1"/>
</dbReference>
<dbReference type="Pfam" id="PF01121">
    <property type="entry name" value="CoaE"/>
    <property type="match status" value="1"/>
</dbReference>
<dbReference type="Pfam" id="PF04229">
    <property type="entry name" value="GrpB"/>
    <property type="match status" value="1"/>
</dbReference>
<dbReference type="SUPFAM" id="SSF81301">
    <property type="entry name" value="Nucleotidyltransferase"/>
    <property type="match status" value="1"/>
</dbReference>
<dbReference type="SUPFAM" id="SSF52540">
    <property type="entry name" value="P-loop containing nucleoside triphosphate hydrolases"/>
    <property type="match status" value="1"/>
</dbReference>
<dbReference type="PROSITE" id="PS51219">
    <property type="entry name" value="DPCK"/>
    <property type="match status" value="1"/>
</dbReference>
<proteinExistence type="inferred from homology"/>
<evidence type="ECO:0000255" key="1">
    <source>
        <dbReference type="HAMAP-Rule" id="MF_00376"/>
    </source>
</evidence>
<evidence type="ECO:0000305" key="2"/>
<gene>
    <name evidence="1" type="primary">coaE</name>
    <name type="ordered locus">MT1667</name>
</gene>
<feature type="chain" id="PRO_0000426987" description="Dephospho-CoA kinase">
    <location>
        <begin position="1"/>
        <end position="407"/>
    </location>
</feature>
<feature type="domain" description="DPCK" evidence="1">
    <location>
        <begin position="3"/>
        <end position="204"/>
    </location>
</feature>
<feature type="region of interest" description="UPF0157">
    <location>
        <begin position="196"/>
        <end position="407"/>
    </location>
</feature>
<feature type="binding site" evidence="1">
    <location>
        <begin position="11"/>
        <end position="16"/>
    </location>
    <ligand>
        <name>ATP</name>
        <dbReference type="ChEBI" id="CHEBI:30616"/>
    </ligand>
</feature>